<gene>
    <name evidence="1" type="primary">rpsG</name>
    <name type="ordered locus">Caul_0802</name>
</gene>
<name>RS7_CAUSK</name>
<organism>
    <name type="scientific">Caulobacter sp. (strain K31)</name>
    <dbReference type="NCBI Taxonomy" id="366602"/>
    <lineage>
        <taxon>Bacteria</taxon>
        <taxon>Pseudomonadati</taxon>
        <taxon>Pseudomonadota</taxon>
        <taxon>Alphaproteobacteria</taxon>
        <taxon>Caulobacterales</taxon>
        <taxon>Caulobacteraceae</taxon>
        <taxon>Caulobacter</taxon>
    </lineage>
</organism>
<protein>
    <recommendedName>
        <fullName evidence="1">Small ribosomal subunit protein uS7</fullName>
    </recommendedName>
    <alternativeName>
        <fullName evidence="2">30S ribosomal protein S7</fullName>
    </alternativeName>
</protein>
<evidence type="ECO:0000255" key="1">
    <source>
        <dbReference type="HAMAP-Rule" id="MF_00480"/>
    </source>
</evidence>
<evidence type="ECO:0000305" key="2"/>
<feature type="chain" id="PRO_1000081273" description="Small ribosomal subunit protein uS7">
    <location>
        <begin position="1"/>
        <end position="157"/>
    </location>
</feature>
<sequence>MSRRRRAEKRQVLPDPKFGDLIVTKFMNYVMYEGKKAVAENIIYGAFDILENKRKDQGPLETFHSALDNVAPAIEVRSRRVGGATYQVPVEVRPDRRRALAIRWLVTAARKRGENTMTEKLAGELLDASNNRGTAVKKREDTHKMAEANRAFSHYRW</sequence>
<comment type="function">
    <text evidence="1">One of the primary rRNA binding proteins, it binds directly to 16S rRNA where it nucleates assembly of the head domain of the 30S subunit. Is located at the subunit interface close to the decoding center, probably blocks exit of the E-site tRNA.</text>
</comment>
<comment type="subunit">
    <text evidence="1">Part of the 30S ribosomal subunit. Contacts proteins S9 and S11.</text>
</comment>
<comment type="similarity">
    <text evidence="1">Belongs to the universal ribosomal protein uS7 family.</text>
</comment>
<dbReference type="EMBL" id="CP000927">
    <property type="protein sequence ID" value="ABZ69933.1"/>
    <property type="molecule type" value="Genomic_DNA"/>
</dbReference>
<dbReference type="SMR" id="B0SUQ5"/>
<dbReference type="STRING" id="366602.Caul_0802"/>
<dbReference type="KEGG" id="cak:Caul_0802"/>
<dbReference type="eggNOG" id="COG0049">
    <property type="taxonomic scope" value="Bacteria"/>
</dbReference>
<dbReference type="HOGENOM" id="CLU_072226_1_1_5"/>
<dbReference type="OrthoDB" id="9807653at2"/>
<dbReference type="GO" id="GO:0015935">
    <property type="term" value="C:small ribosomal subunit"/>
    <property type="evidence" value="ECO:0007669"/>
    <property type="project" value="InterPro"/>
</dbReference>
<dbReference type="GO" id="GO:0019843">
    <property type="term" value="F:rRNA binding"/>
    <property type="evidence" value="ECO:0007669"/>
    <property type="project" value="UniProtKB-UniRule"/>
</dbReference>
<dbReference type="GO" id="GO:0003735">
    <property type="term" value="F:structural constituent of ribosome"/>
    <property type="evidence" value="ECO:0007669"/>
    <property type="project" value="InterPro"/>
</dbReference>
<dbReference type="GO" id="GO:0000049">
    <property type="term" value="F:tRNA binding"/>
    <property type="evidence" value="ECO:0007669"/>
    <property type="project" value="UniProtKB-UniRule"/>
</dbReference>
<dbReference type="GO" id="GO:0006412">
    <property type="term" value="P:translation"/>
    <property type="evidence" value="ECO:0007669"/>
    <property type="project" value="UniProtKB-UniRule"/>
</dbReference>
<dbReference type="CDD" id="cd14869">
    <property type="entry name" value="uS7_Bacteria"/>
    <property type="match status" value="1"/>
</dbReference>
<dbReference type="FunFam" id="1.10.455.10:FF:000001">
    <property type="entry name" value="30S ribosomal protein S7"/>
    <property type="match status" value="1"/>
</dbReference>
<dbReference type="Gene3D" id="1.10.455.10">
    <property type="entry name" value="Ribosomal protein S7 domain"/>
    <property type="match status" value="1"/>
</dbReference>
<dbReference type="HAMAP" id="MF_00480_B">
    <property type="entry name" value="Ribosomal_uS7_B"/>
    <property type="match status" value="1"/>
</dbReference>
<dbReference type="InterPro" id="IPR000235">
    <property type="entry name" value="Ribosomal_uS7"/>
</dbReference>
<dbReference type="InterPro" id="IPR005717">
    <property type="entry name" value="Ribosomal_uS7_bac/org-type"/>
</dbReference>
<dbReference type="InterPro" id="IPR020606">
    <property type="entry name" value="Ribosomal_uS7_CS"/>
</dbReference>
<dbReference type="InterPro" id="IPR023798">
    <property type="entry name" value="Ribosomal_uS7_dom"/>
</dbReference>
<dbReference type="InterPro" id="IPR036823">
    <property type="entry name" value="Ribosomal_uS7_dom_sf"/>
</dbReference>
<dbReference type="NCBIfam" id="TIGR01029">
    <property type="entry name" value="rpsG_bact"/>
    <property type="match status" value="1"/>
</dbReference>
<dbReference type="PANTHER" id="PTHR11205">
    <property type="entry name" value="RIBOSOMAL PROTEIN S7"/>
    <property type="match status" value="1"/>
</dbReference>
<dbReference type="Pfam" id="PF00177">
    <property type="entry name" value="Ribosomal_S7"/>
    <property type="match status" value="1"/>
</dbReference>
<dbReference type="PIRSF" id="PIRSF002122">
    <property type="entry name" value="RPS7p_RPS7a_RPS5e_RPS7o"/>
    <property type="match status" value="1"/>
</dbReference>
<dbReference type="SUPFAM" id="SSF47973">
    <property type="entry name" value="Ribosomal protein S7"/>
    <property type="match status" value="1"/>
</dbReference>
<dbReference type="PROSITE" id="PS00052">
    <property type="entry name" value="RIBOSOMAL_S7"/>
    <property type="match status" value="1"/>
</dbReference>
<keyword id="KW-0687">Ribonucleoprotein</keyword>
<keyword id="KW-0689">Ribosomal protein</keyword>
<keyword id="KW-0694">RNA-binding</keyword>
<keyword id="KW-0699">rRNA-binding</keyword>
<keyword id="KW-0820">tRNA-binding</keyword>
<proteinExistence type="inferred from homology"/>
<reference key="1">
    <citation type="submission" date="2008-01" db="EMBL/GenBank/DDBJ databases">
        <title>Complete sequence of chromosome of Caulobacter sp. K31.</title>
        <authorList>
            <consortium name="US DOE Joint Genome Institute"/>
            <person name="Copeland A."/>
            <person name="Lucas S."/>
            <person name="Lapidus A."/>
            <person name="Barry K."/>
            <person name="Glavina del Rio T."/>
            <person name="Dalin E."/>
            <person name="Tice H."/>
            <person name="Pitluck S."/>
            <person name="Bruce D."/>
            <person name="Goodwin L."/>
            <person name="Thompson L.S."/>
            <person name="Brettin T."/>
            <person name="Detter J.C."/>
            <person name="Han C."/>
            <person name="Schmutz J."/>
            <person name="Larimer F."/>
            <person name="Land M."/>
            <person name="Hauser L."/>
            <person name="Kyrpides N."/>
            <person name="Kim E."/>
            <person name="Stephens C."/>
            <person name="Richardson P."/>
        </authorList>
    </citation>
    <scope>NUCLEOTIDE SEQUENCE [LARGE SCALE GENOMIC DNA]</scope>
    <source>
        <strain>K31</strain>
    </source>
</reference>
<accession>B0SUQ5</accession>